<proteinExistence type="inferred from homology"/>
<name>MCD4_EMENI</name>
<evidence type="ECO:0000250" key="1"/>
<evidence type="ECO:0000255" key="2"/>
<evidence type="ECO:0000305" key="3"/>
<sequence length="930" mass="103515">MARLGRTGFLTLAVVFHLIYAYSIFDIYFVSPIVSGMRPFRVEREPGSEAPAKRLVLFVADGLRADKAFELTPDPDLPEESNGDDLTFLAPFIRSRVLSHGTFGISHTRVPTESRPGHVALIAGLYEDVSAVTTGWKLNPVNFDSVFNRSRHTWSWGSPDILLMFKEGAVPGRVDADTYGEELEDFTSDATALDIWVFDKVKELFASAKKDPELNAKLREDKNVFFLHLLGLDTTGHGYRPYSKEYLRNIKLVDQGIKEISQLVEDFYGDDKTAFVFTADHGMSDWGSHGDGHPDNTRTPLVVWGSGVAPPKQPQHGVPSGHEDGVSADWHLNQVQRNDVAQADVAALMAYLVGLDFPTNSVGQLPLEYVDGTPREKALAALANTQEVLEMYHVKEEHKKAALLRYRPFEPLASDYGNSAEQRLAMIKDLIDRGFYEDAIETSAALFATALEGLRYLQTYDWLFLRTIVTFGYVGWIAYALTTVIHLHVLHGASESDRTTASISFFSSVLVALFSVFLYQGSPWRYYLYGFFPIFFWEEVFARRKAFHAGRAGALLLPKRDLHSNKVEDIDTITYGGAFMLLTGLLYLLFEDEILGTSHQPAAVSRKGSRNIMGLQLGMVLLALIVTRSSAASLQAKQGLPFGNQVVGWGVLIASLLLPFAHRLYPNSHYLHRLMIIFLTFSPTFIILTISYEGLFYFAFCMTLVTWVRLEHATYVYTAKPVAKQAQETIEPPKKANPGATTVVDGETYRFRTLTVSDARVALFFFFLLQSAFFSTGNIASISSFSLDSVYRLIPVFNPFSQGALLILKLLIPFAIISANLGILNRRLEVAPSALFMVVMAISDVMTLNFFYMVRDEGSWLDIGTTISHFCIASFLCTFVAGLEFLSEVFISGVDFGLRTDAITASVPDIVNGITSKGQKDVPNGVEDKE</sequence>
<dbReference type="EC" id="2.-.-.-"/>
<dbReference type="EMBL" id="AACD01000117">
    <property type="protein sequence ID" value="EAA61695.1"/>
    <property type="molecule type" value="Genomic_DNA"/>
</dbReference>
<dbReference type="EMBL" id="BN001304">
    <property type="protein sequence ID" value="CBF79187.1"/>
    <property type="molecule type" value="Genomic_DNA"/>
</dbReference>
<dbReference type="RefSeq" id="XP_664653.1">
    <property type="nucleotide sequence ID" value="XM_659561.1"/>
</dbReference>
<dbReference type="SMR" id="Q5AXD1"/>
<dbReference type="FunCoup" id="Q5AXD1">
    <property type="interactions" value="486"/>
</dbReference>
<dbReference type="STRING" id="227321.Q5AXD1"/>
<dbReference type="GlyCosmos" id="Q5AXD1">
    <property type="glycosylation" value="1 site, No reported glycans"/>
</dbReference>
<dbReference type="EnsemblFungi" id="CBF79187">
    <property type="protein sequence ID" value="CBF79187"/>
    <property type="gene ID" value="ANIA_07049"/>
</dbReference>
<dbReference type="KEGG" id="ani:ANIA_07049"/>
<dbReference type="eggNOG" id="KOG2124">
    <property type="taxonomic scope" value="Eukaryota"/>
</dbReference>
<dbReference type="HOGENOM" id="CLU_007676_0_0_1"/>
<dbReference type="InParanoid" id="Q5AXD1"/>
<dbReference type="OMA" id="QSYFHRE"/>
<dbReference type="OrthoDB" id="2748310at2759"/>
<dbReference type="UniPathway" id="UPA00196"/>
<dbReference type="Proteomes" id="UP000000560">
    <property type="component" value="Chromosome IV"/>
</dbReference>
<dbReference type="GO" id="GO:0005789">
    <property type="term" value="C:endoplasmic reticulum membrane"/>
    <property type="evidence" value="ECO:0000318"/>
    <property type="project" value="GO_Central"/>
</dbReference>
<dbReference type="GO" id="GO:0051377">
    <property type="term" value="F:mannose-ethanolamine phosphotransferase activity"/>
    <property type="evidence" value="ECO:0000318"/>
    <property type="project" value="GO_Central"/>
</dbReference>
<dbReference type="GO" id="GO:0071555">
    <property type="term" value="P:cell wall organization"/>
    <property type="evidence" value="ECO:0007669"/>
    <property type="project" value="UniProtKB-KW"/>
</dbReference>
<dbReference type="GO" id="GO:0006506">
    <property type="term" value="P:GPI anchor biosynthetic process"/>
    <property type="evidence" value="ECO:0000318"/>
    <property type="project" value="GO_Central"/>
</dbReference>
<dbReference type="CDD" id="cd16020">
    <property type="entry name" value="GPI_EPT_1"/>
    <property type="match status" value="1"/>
</dbReference>
<dbReference type="FunFam" id="3.40.720.10:FF:000015">
    <property type="entry name" value="GPI ethanolamine phosphate transferase 1"/>
    <property type="match status" value="1"/>
</dbReference>
<dbReference type="Gene3D" id="3.40.720.10">
    <property type="entry name" value="Alkaline Phosphatase, subunit A"/>
    <property type="match status" value="1"/>
</dbReference>
<dbReference type="InterPro" id="IPR017850">
    <property type="entry name" value="Alkaline_phosphatase_core_sf"/>
</dbReference>
<dbReference type="InterPro" id="IPR007070">
    <property type="entry name" value="GPI_EtnP_transferase_1"/>
</dbReference>
<dbReference type="InterPro" id="IPR017852">
    <property type="entry name" value="GPI_EtnP_transferase_1_C"/>
</dbReference>
<dbReference type="InterPro" id="IPR002591">
    <property type="entry name" value="Phosphodiest/P_Trfase"/>
</dbReference>
<dbReference type="InterPro" id="IPR037671">
    <property type="entry name" value="PIGN_N"/>
</dbReference>
<dbReference type="PANTHER" id="PTHR12250:SF0">
    <property type="entry name" value="GPI ETHANOLAMINE PHOSPHATE TRANSFERASE 1"/>
    <property type="match status" value="1"/>
</dbReference>
<dbReference type="PANTHER" id="PTHR12250">
    <property type="entry name" value="PHOSPHATIDYLINOSITOL GLYCAN, CLASS N"/>
    <property type="match status" value="1"/>
</dbReference>
<dbReference type="Pfam" id="PF01663">
    <property type="entry name" value="Phosphodiest"/>
    <property type="match status" value="1"/>
</dbReference>
<dbReference type="Pfam" id="PF04987">
    <property type="entry name" value="PigN"/>
    <property type="match status" value="2"/>
</dbReference>
<dbReference type="SUPFAM" id="SSF53649">
    <property type="entry name" value="Alkaline phosphatase-like"/>
    <property type="match status" value="1"/>
</dbReference>
<organism>
    <name type="scientific">Emericella nidulans (strain FGSC A4 / ATCC 38163 / CBS 112.46 / NRRL 194 / M139)</name>
    <name type="common">Aspergillus nidulans</name>
    <dbReference type="NCBI Taxonomy" id="227321"/>
    <lineage>
        <taxon>Eukaryota</taxon>
        <taxon>Fungi</taxon>
        <taxon>Dikarya</taxon>
        <taxon>Ascomycota</taxon>
        <taxon>Pezizomycotina</taxon>
        <taxon>Eurotiomycetes</taxon>
        <taxon>Eurotiomycetidae</taxon>
        <taxon>Eurotiales</taxon>
        <taxon>Aspergillaceae</taxon>
        <taxon>Aspergillus</taxon>
        <taxon>Aspergillus subgen. Nidulantes</taxon>
    </lineage>
</organism>
<protein>
    <recommendedName>
        <fullName>GPI ethanolamine phosphate transferase 1</fullName>
        <ecNumber>2.-.-.-</ecNumber>
    </recommendedName>
</protein>
<gene>
    <name type="primary">mcd4</name>
    <name type="ORF">AN7049</name>
</gene>
<comment type="function">
    <text evidence="1">Ethanolamine phosphate transferase involved in glycosylphosphatidylinositol-anchor biosynthesis. Transfers ethanolamine phosphate to the first alpha-1,4-linked mannose of the glycosylphosphatidylinositol precursor of GPI-anchor (By similarity).</text>
</comment>
<comment type="pathway">
    <text>Glycolipid biosynthesis; glycosylphosphatidylinositol-anchor biosynthesis.</text>
</comment>
<comment type="subcellular location">
    <subcellularLocation>
        <location evidence="1">Endoplasmic reticulum membrane</location>
        <topology evidence="1">Multi-pass membrane protein</topology>
    </subcellularLocation>
</comment>
<comment type="similarity">
    <text evidence="3">Belongs to the PIGG/PIGN/PIGO family. PIGN subfamily.</text>
</comment>
<reference key="1">
    <citation type="journal article" date="2005" name="Nature">
        <title>Sequencing of Aspergillus nidulans and comparative analysis with A. fumigatus and A. oryzae.</title>
        <authorList>
            <person name="Galagan J.E."/>
            <person name="Calvo S.E."/>
            <person name="Cuomo C."/>
            <person name="Ma L.-J."/>
            <person name="Wortman J.R."/>
            <person name="Batzoglou S."/>
            <person name="Lee S.-I."/>
            <person name="Bastuerkmen M."/>
            <person name="Spevak C.C."/>
            <person name="Clutterbuck J."/>
            <person name="Kapitonov V."/>
            <person name="Jurka J."/>
            <person name="Scazzocchio C."/>
            <person name="Farman M.L."/>
            <person name="Butler J."/>
            <person name="Purcell S."/>
            <person name="Harris S."/>
            <person name="Braus G.H."/>
            <person name="Draht O."/>
            <person name="Busch S."/>
            <person name="D'Enfert C."/>
            <person name="Bouchier C."/>
            <person name="Goldman G.H."/>
            <person name="Bell-Pedersen D."/>
            <person name="Griffiths-Jones S."/>
            <person name="Doonan J.H."/>
            <person name="Yu J."/>
            <person name="Vienken K."/>
            <person name="Pain A."/>
            <person name="Freitag M."/>
            <person name="Selker E.U."/>
            <person name="Archer D.B."/>
            <person name="Penalva M.A."/>
            <person name="Oakley B.R."/>
            <person name="Momany M."/>
            <person name="Tanaka T."/>
            <person name="Kumagai T."/>
            <person name="Asai K."/>
            <person name="Machida M."/>
            <person name="Nierman W.C."/>
            <person name="Denning D.W."/>
            <person name="Caddick M.X."/>
            <person name="Hynes M."/>
            <person name="Paoletti M."/>
            <person name="Fischer R."/>
            <person name="Miller B.L."/>
            <person name="Dyer P.S."/>
            <person name="Sachs M.S."/>
            <person name="Osmani S.A."/>
            <person name="Birren B.W."/>
        </authorList>
    </citation>
    <scope>NUCLEOTIDE SEQUENCE [LARGE SCALE GENOMIC DNA]</scope>
    <source>
        <strain>FGSC A4 / ATCC 38163 / CBS 112.46 / NRRL 194 / M139</strain>
    </source>
</reference>
<reference key="2">
    <citation type="journal article" date="2009" name="Fungal Genet. Biol.">
        <title>The 2008 update of the Aspergillus nidulans genome annotation: a community effort.</title>
        <authorList>
            <person name="Wortman J.R."/>
            <person name="Gilsenan J.M."/>
            <person name="Joardar V."/>
            <person name="Deegan J."/>
            <person name="Clutterbuck J."/>
            <person name="Andersen M.R."/>
            <person name="Archer D."/>
            <person name="Bencina M."/>
            <person name="Braus G."/>
            <person name="Coutinho P."/>
            <person name="von Dohren H."/>
            <person name="Doonan J."/>
            <person name="Driessen A.J."/>
            <person name="Durek P."/>
            <person name="Espeso E."/>
            <person name="Fekete E."/>
            <person name="Flipphi M."/>
            <person name="Estrada C.G."/>
            <person name="Geysens S."/>
            <person name="Goldman G."/>
            <person name="de Groot P.W."/>
            <person name="Hansen K."/>
            <person name="Harris S.D."/>
            <person name="Heinekamp T."/>
            <person name="Helmstaedt K."/>
            <person name="Henrissat B."/>
            <person name="Hofmann G."/>
            <person name="Homan T."/>
            <person name="Horio T."/>
            <person name="Horiuchi H."/>
            <person name="James S."/>
            <person name="Jones M."/>
            <person name="Karaffa L."/>
            <person name="Karanyi Z."/>
            <person name="Kato M."/>
            <person name="Keller N."/>
            <person name="Kelly D.E."/>
            <person name="Kiel J.A."/>
            <person name="Kim J.M."/>
            <person name="van der Klei I.J."/>
            <person name="Klis F.M."/>
            <person name="Kovalchuk A."/>
            <person name="Krasevec N."/>
            <person name="Kubicek C.P."/>
            <person name="Liu B."/>
            <person name="Maccabe A."/>
            <person name="Meyer V."/>
            <person name="Mirabito P."/>
            <person name="Miskei M."/>
            <person name="Mos M."/>
            <person name="Mullins J."/>
            <person name="Nelson D.R."/>
            <person name="Nielsen J."/>
            <person name="Oakley B.R."/>
            <person name="Osmani S.A."/>
            <person name="Pakula T."/>
            <person name="Paszewski A."/>
            <person name="Paulsen I."/>
            <person name="Pilsyk S."/>
            <person name="Pocsi I."/>
            <person name="Punt P.J."/>
            <person name="Ram A.F."/>
            <person name="Ren Q."/>
            <person name="Robellet X."/>
            <person name="Robson G."/>
            <person name="Seiboth B."/>
            <person name="van Solingen P."/>
            <person name="Specht T."/>
            <person name="Sun J."/>
            <person name="Taheri-Talesh N."/>
            <person name="Takeshita N."/>
            <person name="Ussery D."/>
            <person name="vanKuyk P.A."/>
            <person name="Visser H."/>
            <person name="van de Vondervoort P.J."/>
            <person name="de Vries R.P."/>
            <person name="Walton J."/>
            <person name="Xiang X."/>
            <person name="Xiong Y."/>
            <person name="Zeng A.P."/>
            <person name="Brandt B.W."/>
            <person name="Cornell M.J."/>
            <person name="van den Hondel C.A."/>
            <person name="Visser J."/>
            <person name="Oliver S.G."/>
            <person name="Turner G."/>
        </authorList>
    </citation>
    <scope>GENOME REANNOTATION</scope>
    <source>
        <strain>FGSC A4 / ATCC 38163 / CBS 112.46 / NRRL 194 / M139</strain>
    </source>
</reference>
<feature type="chain" id="PRO_0000246207" description="GPI ethanolamine phosphate transferase 1">
    <location>
        <begin position="1"/>
        <end position="930"/>
    </location>
</feature>
<feature type="topological domain" description="Cytoplasmic" evidence="2">
    <location>
        <begin position="1"/>
        <end position="8"/>
    </location>
</feature>
<feature type="transmembrane region" description="Helical" evidence="2">
    <location>
        <begin position="9"/>
        <end position="29"/>
    </location>
</feature>
<feature type="topological domain" description="Lumenal" evidence="2">
    <location>
        <begin position="30"/>
        <end position="466"/>
    </location>
</feature>
<feature type="transmembrane region" description="Helical" evidence="2">
    <location>
        <begin position="467"/>
        <end position="487"/>
    </location>
</feature>
<feature type="topological domain" description="Cytoplasmic" evidence="2">
    <location>
        <begin position="488"/>
        <end position="498"/>
    </location>
</feature>
<feature type="transmembrane region" description="Helical" evidence="2">
    <location>
        <begin position="499"/>
        <end position="519"/>
    </location>
</feature>
<feature type="topological domain" description="Lumenal" evidence="2">
    <location>
        <begin position="520"/>
        <end position="521"/>
    </location>
</feature>
<feature type="transmembrane region" description="Helical" evidence="2">
    <location>
        <begin position="522"/>
        <end position="542"/>
    </location>
</feature>
<feature type="topological domain" description="Cytoplasmic" evidence="2">
    <location>
        <begin position="543"/>
        <end position="569"/>
    </location>
</feature>
<feature type="transmembrane region" description="Helical" evidence="2">
    <location>
        <begin position="570"/>
        <end position="590"/>
    </location>
</feature>
<feature type="topological domain" description="Lumenal" evidence="2">
    <location>
        <begin position="591"/>
        <end position="611"/>
    </location>
</feature>
<feature type="transmembrane region" description="Helical" evidence="2">
    <location>
        <begin position="612"/>
        <end position="632"/>
    </location>
</feature>
<feature type="topological domain" description="Cytoplasmic" evidence="2">
    <location>
        <begin position="633"/>
        <end position="639"/>
    </location>
</feature>
<feature type="transmembrane region" description="Helical" evidence="2">
    <location>
        <begin position="640"/>
        <end position="660"/>
    </location>
</feature>
<feature type="topological domain" description="Lumenal" evidence="2">
    <location>
        <begin position="661"/>
        <end position="684"/>
    </location>
</feature>
<feature type="transmembrane region" description="Helical" evidence="2">
    <location>
        <begin position="685"/>
        <end position="705"/>
    </location>
</feature>
<feature type="topological domain" description="Cytoplasmic" evidence="2">
    <location>
        <begin position="706"/>
        <end position="761"/>
    </location>
</feature>
<feature type="transmembrane region" description="Helical" evidence="2">
    <location>
        <begin position="762"/>
        <end position="782"/>
    </location>
</feature>
<feature type="topological domain" description="Lumenal" evidence="2">
    <location>
        <begin position="783"/>
        <end position="803"/>
    </location>
</feature>
<feature type="transmembrane region" description="Helical" evidence="2">
    <location>
        <begin position="804"/>
        <end position="824"/>
    </location>
</feature>
<feature type="topological domain" description="Cytoplasmic" evidence="2">
    <location>
        <begin position="825"/>
        <end position="833"/>
    </location>
</feature>
<feature type="transmembrane region" description="Helical" evidence="2">
    <location>
        <begin position="834"/>
        <end position="854"/>
    </location>
</feature>
<feature type="topological domain" description="Lumenal" evidence="2">
    <location>
        <begin position="855"/>
        <end position="870"/>
    </location>
</feature>
<feature type="transmembrane region" description="Helical" evidence="2">
    <location>
        <begin position="871"/>
        <end position="891"/>
    </location>
</feature>
<feature type="topological domain" description="Cytoplasmic" evidence="2">
    <location>
        <begin position="892"/>
        <end position="930"/>
    </location>
</feature>
<feature type="glycosylation site" description="N-linked (GlcNAc...) asparagine" evidence="2">
    <location>
        <position position="148"/>
    </location>
</feature>
<keyword id="KW-0961">Cell wall biogenesis/degradation</keyword>
<keyword id="KW-0256">Endoplasmic reticulum</keyword>
<keyword id="KW-0325">Glycoprotein</keyword>
<keyword id="KW-0337">GPI-anchor biosynthesis</keyword>
<keyword id="KW-0472">Membrane</keyword>
<keyword id="KW-1185">Reference proteome</keyword>
<keyword id="KW-0808">Transferase</keyword>
<keyword id="KW-0812">Transmembrane</keyword>
<keyword id="KW-1133">Transmembrane helix</keyword>
<accession>Q5AXD1</accession>
<accession>C8VB54</accession>